<comment type="subcellular location">
    <subcellularLocation>
        <location evidence="1">Lipid droplet</location>
    </subcellularLocation>
    <subcellularLocation>
        <location evidence="1">Mitochondrion</location>
    </subcellularLocation>
</comment>
<comment type="similarity">
    <text evidence="2">Belongs to the YIM1 family.</text>
</comment>
<sequence length="362" mass="40418">MVAHNSVTYINRTTPLTITSEEIDLDRCYKDSEIVVEVHAAALNPIDILLHALSYPSISGRKKKVLGKDYSGVVVKAGKSVKGFKVGDLVNGMYEDFLYRARGSVSNYLILDPSKQLSIAHFKKLEGQTDDDAFIQNAGWPLIFGTAHTLLTEKKQNLGPDSKVLVLGASTSVGNALLKIAKNELKIGTVVGTCSEGSIQYNKETVGFDHLVPYNDTSKSAAQHIRDYVKNELHGEKFDLIADCCGSNEFFPFINEIMKSKTKNGHYLTIVGDNKFNYRKIELLKAINICGLIRRFNPFKNYNYSFTMVPSASDYMELGAKMIQKGTYKPQIDSVYDFEQYQDAVERLLSNRAKGKIVIKVK</sequence>
<dbReference type="EMBL" id="DS480389">
    <property type="protein sequence ID" value="EDO18475.1"/>
    <property type="molecule type" value="Genomic_DNA"/>
</dbReference>
<dbReference type="RefSeq" id="XP_001646333.1">
    <property type="nucleotide sequence ID" value="XM_001646283.1"/>
</dbReference>
<dbReference type="SMR" id="A7TH23"/>
<dbReference type="FunCoup" id="A7TH23">
    <property type="interactions" value="163"/>
</dbReference>
<dbReference type="GeneID" id="5546762"/>
<dbReference type="KEGG" id="vpo:Kpol_1032p71"/>
<dbReference type="eggNOG" id="KOG1198">
    <property type="taxonomic scope" value="Eukaryota"/>
</dbReference>
<dbReference type="HOGENOM" id="CLU_026673_3_3_1"/>
<dbReference type="InParanoid" id="A7TH23"/>
<dbReference type="OMA" id="GPLTYFT"/>
<dbReference type="OrthoDB" id="3509362at2759"/>
<dbReference type="PhylomeDB" id="A7TH23"/>
<dbReference type="Proteomes" id="UP000000267">
    <property type="component" value="Unassembled WGS sequence"/>
</dbReference>
<dbReference type="GO" id="GO:0005811">
    <property type="term" value="C:lipid droplet"/>
    <property type="evidence" value="ECO:0007669"/>
    <property type="project" value="UniProtKB-SubCell"/>
</dbReference>
<dbReference type="GO" id="GO:0005739">
    <property type="term" value="C:mitochondrion"/>
    <property type="evidence" value="ECO:0007669"/>
    <property type="project" value="UniProtKB-SubCell"/>
</dbReference>
<dbReference type="GO" id="GO:0018455">
    <property type="term" value="F:alcohol dehydrogenase [NAD(P)+] activity"/>
    <property type="evidence" value="ECO:0007669"/>
    <property type="project" value="EnsemblFungi"/>
</dbReference>
<dbReference type="GO" id="GO:0006974">
    <property type="term" value="P:DNA damage response"/>
    <property type="evidence" value="ECO:0007669"/>
    <property type="project" value="EnsemblFungi"/>
</dbReference>
<dbReference type="CDD" id="cd08247">
    <property type="entry name" value="AST1_like"/>
    <property type="match status" value="1"/>
</dbReference>
<dbReference type="Gene3D" id="3.90.180.10">
    <property type="entry name" value="Medium-chain alcohol dehydrogenases, catalytic domain"/>
    <property type="match status" value="1"/>
</dbReference>
<dbReference type="Gene3D" id="3.40.50.720">
    <property type="entry name" value="NAD(P)-binding Rossmann-like Domain"/>
    <property type="match status" value="1"/>
</dbReference>
<dbReference type="InterPro" id="IPR013154">
    <property type="entry name" value="ADH-like_N"/>
</dbReference>
<dbReference type="InterPro" id="IPR011032">
    <property type="entry name" value="GroES-like_sf"/>
</dbReference>
<dbReference type="InterPro" id="IPR036291">
    <property type="entry name" value="NAD(P)-bd_dom_sf"/>
</dbReference>
<dbReference type="InterPro" id="IPR020843">
    <property type="entry name" value="PKS_ER"/>
</dbReference>
<dbReference type="InterPro" id="IPR050700">
    <property type="entry name" value="YIM1/Zinc_Alcohol_DH_Fams"/>
</dbReference>
<dbReference type="PANTHER" id="PTHR11695">
    <property type="entry name" value="ALCOHOL DEHYDROGENASE RELATED"/>
    <property type="match status" value="1"/>
</dbReference>
<dbReference type="PANTHER" id="PTHR11695:SF294">
    <property type="entry name" value="RETICULON-4-INTERACTING PROTEIN 1, MITOCHONDRIAL"/>
    <property type="match status" value="1"/>
</dbReference>
<dbReference type="Pfam" id="PF08240">
    <property type="entry name" value="ADH_N"/>
    <property type="match status" value="1"/>
</dbReference>
<dbReference type="Pfam" id="PF13602">
    <property type="entry name" value="ADH_zinc_N_2"/>
    <property type="match status" value="1"/>
</dbReference>
<dbReference type="SMART" id="SM00829">
    <property type="entry name" value="PKS_ER"/>
    <property type="match status" value="1"/>
</dbReference>
<dbReference type="SUPFAM" id="SSF50129">
    <property type="entry name" value="GroES-like"/>
    <property type="match status" value="1"/>
</dbReference>
<dbReference type="SUPFAM" id="SSF51735">
    <property type="entry name" value="NAD(P)-binding Rossmann-fold domains"/>
    <property type="match status" value="1"/>
</dbReference>
<protein>
    <recommendedName>
        <fullName>Protein YIM1</fullName>
    </recommendedName>
</protein>
<keyword id="KW-0551">Lipid droplet</keyword>
<keyword id="KW-0496">Mitochondrion</keyword>
<keyword id="KW-1185">Reference proteome</keyword>
<reference key="1">
    <citation type="journal article" date="2007" name="Proc. Natl. Acad. Sci. U.S.A.">
        <title>Independent sorting-out of thousands of duplicated gene pairs in two yeast species descended from a whole-genome duplication.</title>
        <authorList>
            <person name="Scannell D.R."/>
            <person name="Frank A.C."/>
            <person name="Conant G.C."/>
            <person name="Byrne K.P."/>
            <person name="Woolfit M."/>
            <person name="Wolfe K.H."/>
        </authorList>
    </citation>
    <scope>NUCLEOTIDE SEQUENCE [LARGE SCALE GENOMIC DNA]</scope>
    <source>
        <strain>ATCC 22028 / DSM 70294 / BCRC 21397 / CBS 2163 / NBRC 10782 / NRRL Y-8283 / UCD 57-17</strain>
    </source>
</reference>
<gene>
    <name type="primary">YIM1</name>
    <name type="ORF">Kpol_1032p71</name>
</gene>
<name>YIM1_VANPO</name>
<proteinExistence type="inferred from homology"/>
<accession>A7TH23</accession>
<feature type="chain" id="PRO_0000409679" description="Protein YIM1">
    <location>
        <begin position="1"/>
        <end position="362"/>
    </location>
</feature>
<organism>
    <name type="scientific">Vanderwaltozyma polyspora (strain ATCC 22028 / DSM 70294 / BCRC 21397 / CBS 2163 / NBRC 10782 / NRRL Y-8283 / UCD 57-17)</name>
    <name type="common">Kluyveromyces polysporus</name>
    <dbReference type="NCBI Taxonomy" id="436907"/>
    <lineage>
        <taxon>Eukaryota</taxon>
        <taxon>Fungi</taxon>
        <taxon>Dikarya</taxon>
        <taxon>Ascomycota</taxon>
        <taxon>Saccharomycotina</taxon>
        <taxon>Saccharomycetes</taxon>
        <taxon>Saccharomycetales</taxon>
        <taxon>Saccharomycetaceae</taxon>
        <taxon>Vanderwaltozyma</taxon>
    </lineage>
</organism>
<evidence type="ECO:0000250" key="1"/>
<evidence type="ECO:0000305" key="2"/>